<sequence>MNRTEAREWVVKMLYQYDVSRLPISKILENFYKEKDPGEQKEYIENTVIGAIEHLEEIDKEIERYSQNWALNRMPKIDLAILRCSIYEMQYGNIPVNISINEAVEIAKKYSTEDSPAFINGLLGAFVRDEGLEEGESNDN</sequence>
<proteinExistence type="inferred from homology"/>
<evidence type="ECO:0000255" key="1">
    <source>
        <dbReference type="HAMAP-Rule" id="MF_00073"/>
    </source>
</evidence>
<gene>
    <name evidence="1" type="primary">nusB</name>
    <name type="ordered locus">Teth39_1097</name>
</gene>
<feature type="chain" id="PRO_1000092595" description="Transcription antitermination protein NusB">
    <location>
        <begin position="1"/>
        <end position="140"/>
    </location>
</feature>
<keyword id="KW-1185">Reference proteome</keyword>
<keyword id="KW-0694">RNA-binding</keyword>
<keyword id="KW-0804">Transcription</keyword>
<keyword id="KW-0889">Transcription antitermination</keyword>
<keyword id="KW-0805">Transcription regulation</keyword>
<accession>B0K9D9</accession>
<dbReference type="EMBL" id="CP000924">
    <property type="protein sequence ID" value="ABY94752.1"/>
    <property type="molecule type" value="Genomic_DNA"/>
</dbReference>
<dbReference type="RefSeq" id="WP_003868781.1">
    <property type="nucleotide sequence ID" value="NC_010321.1"/>
</dbReference>
<dbReference type="SMR" id="B0K9D9"/>
<dbReference type="STRING" id="340099.Teth39_1097"/>
<dbReference type="KEGG" id="tpd:Teth39_1097"/>
<dbReference type="eggNOG" id="COG0781">
    <property type="taxonomic scope" value="Bacteria"/>
</dbReference>
<dbReference type="HOGENOM" id="CLU_087843_3_3_9"/>
<dbReference type="Proteomes" id="UP000002156">
    <property type="component" value="Chromosome"/>
</dbReference>
<dbReference type="GO" id="GO:0005829">
    <property type="term" value="C:cytosol"/>
    <property type="evidence" value="ECO:0007669"/>
    <property type="project" value="TreeGrafter"/>
</dbReference>
<dbReference type="GO" id="GO:0003723">
    <property type="term" value="F:RNA binding"/>
    <property type="evidence" value="ECO:0007669"/>
    <property type="project" value="UniProtKB-UniRule"/>
</dbReference>
<dbReference type="GO" id="GO:0006353">
    <property type="term" value="P:DNA-templated transcription termination"/>
    <property type="evidence" value="ECO:0007669"/>
    <property type="project" value="UniProtKB-UniRule"/>
</dbReference>
<dbReference type="GO" id="GO:0031564">
    <property type="term" value="P:transcription antitermination"/>
    <property type="evidence" value="ECO:0007669"/>
    <property type="project" value="UniProtKB-KW"/>
</dbReference>
<dbReference type="Gene3D" id="1.10.940.10">
    <property type="entry name" value="NusB-like"/>
    <property type="match status" value="1"/>
</dbReference>
<dbReference type="HAMAP" id="MF_00073">
    <property type="entry name" value="NusB"/>
    <property type="match status" value="1"/>
</dbReference>
<dbReference type="InterPro" id="IPR035926">
    <property type="entry name" value="NusB-like_sf"/>
</dbReference>
<dbReference type="InterPro" id="IPR011605">
    <property type="entry name" value="NusB_fam"/>
</dbReference>
<dbReference type="InterPro" id="IPR006027">
    <property type="entry name" value="NusB_RsmB_TIM44"/>
</dbReference>
<dbReference type="NCBIfam" id="TIGR01951">
    <property type="entry name" value="nusB"/>
    <property type="match status" value="1"/>
</dbReference>
<dbReference type="PANTHER" id="PTHR11078:SF3">
    <property type="entry name" value="ANTITERMINATION NUSB DOMAIN-CONTAINING PROTEIN"/>
    <property type="match status" value="1"/>
</dbReference>
<dbReference type="PANTHER" id="PTHR11078">
    <property type="entry name" value="N UTILIZATION SUBSTANCE PROTEIN B-RELATED"/>
    <property type="match status" value="1"/>
</dbReference>
<dbReference type="Pfam" id="PF01029">
    <property type="entry name" value="NusB"/>
    <property type="match status" value="1"/>
</dbReference>
<dbReference type="SUPFAM" id="SSF48013">
    <property type="entry name" value="NusB-like"/>
    <property type="match status" value="1"/>
</dbReference>
<protein>
    <recommendedName>
        <fullName evidence="1">Transcription antitermination protein NusB</fullName>
    </recommendedName>
    <alternativeName>
        <fullName evidence="1">Antitermination factor NusB</fullName>
    </alternativeName>
</protein>
<name>NUSB_THEP3</name>
<comment type="function">
    <text evidence="1">Involved in transcription antitermination. Required for transcription of ribosomal RNA (rRNA) genes. Binds specifically to the boxA antiterminator sequence of the ribosomal RNA (rrn) operons.</text>
</comment>
<comment type="similarity">
    <text evidence="1">Belongs to the NusB family.</text>
</comment>
<organism>
    <name type="scientific">Thermoanaerobacter pseudethanolicus (strain ATCC 33223 / 39E)</name>
    <name type="common">Clostridium thermohydrosulfuricum</name>
    <dbReference type="NCBI Taxonomy" id="340099"/>
    <lineage>
        <taxon>Bacteria</taxon>
        <taxon>Bacillati</taxon>
        <taxon>Bacillota</taxon>
        <taxon>Clostridia</taxon>
        <taxon>Thermoanaerobacterales</taxon>
        <taxon>Thermoanaerobacteraceae</taxon>
        <taxon>Thermoanaerobacter</taxon>
    </lineage>
</organism>
<reference key="1">
    <citation type="submission" date="2008-01" db="EMBL/GenBank/DDBJ databases">
        <title>Complete sequence of Thermoanaerobacter pseudethanolicus 39E.</title>
        <authorList>
            <person name="Copeland A."/>
            <person name="Lucas S."/>
            <person name="Lapidus A."/>
            <person name="Barry K."/>
            <person name="Glavina del Rio T."/>
            <person name="Dalin E."/>
            <person name="Tice H."/>
            <person name="Pitluck S."/>
            <person name="Bruce D."/>
            <person name="Goodwin L."/>
            <person name="Saunders E."/>
            <person name="Brettin T."/>
            <person name="Detter J.C."/>
            <person name="Han C."/>
            <person name="Schmutz J."/>
            <person name="Larimer F."/>
            <person name="Land M."/>
            <person name="Hauser L."/>
            <person name="Kyrpides N."/>
            <person name="Lykidis A."/>
            <person name="Hemme C."/>
            <person name="Fields M.W."/>
            <person name="He Z."/>
            <person name="Zhou J."/>
            <person name="Richardson P."/>
        </authorList>
    </citation>
    <scope>NUCLEOTIDE SEQUENCE [LARGE SCALE GENOMIC DNA]</scope>
    <source>
        <strain>ATCC 33223 / DSM 2355 / 39E</strain>
    </source>
</reference>